<comment type="catalytic activity">
    <reaction evidence="1">
        <text>tRNA(Gly) + glycine + ATP = glycyl-tRNA(Gly) + AMP + diphosphate</text>
        <dbReference type="Rhea" id="RHEA:16013"/>
        <dbReference type="Rhea" id="RHEA-COMP:9664"/>
        <dbReference type="Rhea" id="RHEA-COMP:9683"/>
        <dbReference type="ChEBI" id="CHEBI:30616"/>
        <dbReference type="ChEBI" id="CHEBI:33019"/>
        <dbReference type="ChEBI" id="CHEBI:57305"/>
        <dbReference type="ChEBI" id="CHEBI:78442"/>
        <dbReference type="ChEBI" id="CHEBI:78522"/>
        <dbReference type="ChEBI" id="CHEBI:456215"/>
        <dbReference type="EC" id="6.1.1.14"/>
    </reaction>
</comment>
<comment type="subunit">
    <text evidence="1">Tetramer of two alpha and two beta subunits.</text>
</comment>
<comment type="subcellular location">
    <subcellularLocation>
        <location evidence="1">Cytoplasm</location>
    </subcellularLocation>
</comment>
<comment type="similarity">
    <text evidence="1">Belongs to the class-II aminoacyl-tRNA synthetase family.</text>
</comment>
<sequence>MTTKHDVKTFQGFILTLQEYWAQQGCAIVQPLDMEVGAGTFHPQTFLRSLGPEPMSSAYVQPSRRPTDGRYGENPNRLQHYYQFQVVLKPSPDNIQELYLGSLQALGIDTQIHDIRFVEDNWESPTLGAWGLGWEIWLNGMEVTQFTYFQQVGGIECSPVTGEITYGLERLAMYIQGVDSVYDLVWTDGPLGRITYGDVFHQNEVEQSTYNFEHADVDFMFTLFDQCEKMCQHLLSLEKPLPLPAYEQVMKASHAFNLLDARHAISVTERQRYILRVRTMAKAVAESYYQAREALGFPMCK</sequence>
<gene>
    <name evidence="1" type="primary">glyQ</name>
    <name type="ordered locus">Sbal195_0013</name>
</gene>
<evidence type="ECO:0000255" key="1">
    <source>
        <dbReference type="HAMAP-Rule" id="MF_00254"/>
    </source>
</evidence>
<name>SYGA_SHEB9</name>
<feature type="chain" id="PRO_1000078535" description="Glycine--tRNA ligase alpha subunit">
    <location>
        <begin position="1"/>
        <end position="301"/>
    </location>
</feature>
<dbReference type="EC" id="6.1.1.14" evidence="1"/>
<dbReference type="EMBL" id="CP000891">
    <property type="protein sequence ID" value="ABX47195.1"/>
    <property type="molecule type" value="Genomic_DNA"/>
</dbReference>
<dbReference type="RefSeq" id="WP_006083814.1">
    <property type="nucleotide sequence ID" value="NC_009997.1"/>
</dbReference>
<dbReference type="SMR" id="A9KU84"/>
<dbReference type="GeneID" id="11770383"/>
<dbReference type="KEGG" id="sbn:Sbal195_0013"/>
<dbReference type="HOGENOM" id="CLU_057066_1_0_6"/>
<dbReference type="Proteomes" id="UP000000770">
    <property type="component" value="Chromosome"/>
</dbReference>
<dbReference type="GO" id="GO:0005829">
    <property type="term" value="C:cytosol"/>
    <property type="evidence" value="ECO:0007669"/>
    <property type="project" value="TreeGrafter"/>
</dbReference>
<dbReference type="GO" id="GO:0005524">
    <property type="term" value="F:ATP binding"/>
    <property type="evidence" value="ECO:0007669"/>
    <property type="project" value="UniProtKB-UniRule"/>
</dbReference>
<dbReference type="GO" id="GO:0004820">
    <property type="term" value="F:glycine-tRNA ligase activity"/>
    <property type="evidence" value="ECO:0007669"/>
    <property type="project" value="UniProtKB-UniRule"/>
</dbReference>
<dbReference type="GO" id="GO:0006426">
    <property type="term" value="P:glycyl-tRNA aminoacylation"/>
    <property type="evidence" value="ECO:0007669"/>
    <property type="project" value="UniProtKB-UniRule"/>
</dbReference>
<dbReference type="CDD" id="cd00733">
    <property type="entry name" value="GlyRS_alpha_core"/>
    <property type="match status" value="1"/>
</dbReference>
<dbReference type="FunFam" id="3.30.930.10:FF:000006">
    <property type="entry name" value="Glycine--tRNA ligase alpha subunit"/>
    <property type="match status" value="1"/>
</dbReference>
<dbReference type="Gene3D" id="3.30.930.10">
    <property type="entry name" value="Bira Bifunctional Protein, Domain 2"/>
    <property type="match status" value="1"/>
</dbReference>
<dbReference type="Gene3D" id="1.20.58.180">
    <property type="entry name" value="Class II aaRS and biotin synthetases, domain 2"/>
    <property type="match status" value="1"/>
</dbReference>
<dbReference type="HAMAP" id="MF_00254">
    <property type="entry name" value="Gly_tRNA_synth_alpha"/>
    <property type="match status" value="1"/>
</dbReference>
<dbReference type="InterPro" id="IPR045864">
    <property type="entry name" value="aa-tRNA-synth_II/BPL/LPL"/>
</dbReference>
<dbReference type="InterPro" id="IPR006194">
    <property type="entry name" value="Gly-tRNA-synth_heterodimer"/>
</dbReference>
<dbReference type="InterPro" id="IPR002310">
    <property type="entry name" value="Gly-tRNA_ligase_asu"/>
</dbReference>
<dbReference type="NCBIfam" id="TIGR00388">
    <property type="entry name" value="glyQ"/>
    <property type="match status" value="1"/>
</dbReference>
<dbReference type="NCBIfam" id="NF006827">
    <property type="entry name" value="PRK09348.1"/>
    <property type="match status" value="1"/>
</dbReference>
<dbReference type="PANTHER" id="PTHR30075:SF2">
    <property type="entry name" value="GLYCINE--TRNA LIGASE, CHLOROPLASTIC_MITOCHONDRIAL 2"/>
    <property type="match status" value="1"/>
</dbReference>
<dbReference type="PANTHER" id="PTHR30075">
    <property type="entry name" value="GLYCYL-TRNA SYNTHETASE"/>
    <property type="match status" value="1"/>
</dbReference>
<dbReference type="Pfam" id="PF02091">
    <property type="entry name" value="tRNA-synt_2e"/>
    <property type="match status" value="1"/>
</dbReference>
<dbReference type="PRINTS" id="PR01044">
    <property type="entry name" value="TRNASYNTHGA"/>
</dbReference>
<dbReference type="SUPFAM" id="SSF55681">
    <property type="entry name" value="Class II aaRS and biotin synthetases"/>
    <property type="match status" value="1"/>
</dbReference>
<dbReference type="PROSITE" id="PS50861">
    <property type="entry name" value="AA_TRNA_LIGASE_II_GLYAB"/>
    <property type="match status" value="1"/>
</dbReference>
<accession>A9KU84</accession>
<organism>
    <name type="scientific">Shewanella baltica (strain OS195)</name>
    <dbReference type="NCBI Taxonomy" id="399599"/>
    <lineage>
        <taxon>Bacteria</taxon>
        <taxon>Pseudomonadati</taxon>
        <taxon>Pseudomonadota</taxon>
        <taxon>Gammaproteobacteria</taxon>
        <taxon>Alteromonadales</taxon>
        <taxon>Shewanellaceae</taxon>
        <taxon>Shewanella</taxon>
    </lineage>
</organism>
<keyword id="KW-0030">Aminoacyl-tRNA synthetase</keyword>
<keyword id="KW-0067">ATP-binding</keyword>
<keyword id="KW-0963">Cytoplasm</keyword>
<keyword id="KW-0436">Ligase</keyword>
<keyword id="KW-0547">Nucleotide-binding</keyword>
<keyword id="KW-0648">Protein biosynthesis</keyword>
<protein>
    <recommendedName>
        <fullName evidence="1">Glycine--tRNA ligase alpha subunit</fullName>
        <ecNumber evidence="1">6.1.1.14</ecNumber>
    </recommendedName>
    <alternativeName>
        <fullName evidence="1">Glycyl-tRNA synthetase alpha subunit</fullName>
        <shortName evidence="1">GlyRS</shortName>
    </alternativeName>
</protein>
<proteinExistence type="inferred from homology"/>
<reference key="1">
    <citation type="submission" date="2007-11" db="EMBL/GenBank/DDBJ databases">
        <title>Complete sequence of chromosome of Shewanella baltica OS195.</title>
        <authorList>
            <consortium name="US DOE Joint Genome Institute"/>
            <person name="Copeland A."/>
            <person name="Lucas S."/>
            <person name="Lapidus A."/>
            <person name="Barry K."/>
            <person name="Glavina del Rio T."/>
            <person name="Dalin E."/>
            <person name="Tice H."/>
            <person name="Pitluck S."/>
            <person name="Chain P."/>
            <person name="Malfatti S."/>
            <person name="Shin M."/>
            <person name="Vergez L."/>
            <person name="Schmutz J."/>
            <person name="Larimer F."/>
            <person name="Land M."/>
            <person name="Hauser L."/>
            <person name="Kyrpides N."/>
            <person name="Kim E."/>
            <person name="Brettar I."/>
            <person name="Rodrigues J."/>
            <person name="Konstantinidis K."/>
            <person name="Klappenbach J."/>
            <person name="Hofle M."/>
            <person name="Tiedje J."/>
            <person name="Richardson P."/>
        </authorList>
    </citation>
    <scope>NUCLEOTIDE SEQUENCE [LARGE SCALE GENOMIC DNA]</scope>
    <source>
        <strain>OS195</strain>
    </source>
</reference>